<dbReference type="EMBL" id="AE004439">
    <property type="protein sequence ID" value="AAK03493.1"/>
    <property type="molecule type" value="Genomic_DNA"/>
</dbReference>
<dbReference type="RefSeq" id="WP_005717926.1">
    <property type="nucleotide sequence ID" value="NC_002663.1"/>
</dbReference>
<dbReference type="SMR" id="Q9CL37"/>
<dbReference type="STRING" id="272843.PM1409"/>
<dbReference type="EnsemblBacteria" id="AAK03493">
    <property type="protein sequence ID" value="AAK03493"/>
    <property type="gene ID" value="PM1409"/>
</dbReference>
<dbReference type="GeneID" id="77207032"/>
<dbReference type="KEGG" id="pmu:PM1409"/>
<dbReference type="HOGENOM" id="CLU_058591_0_2_6"/>
<dbReference type="OrthoDB" id="9806396at2"/>
<dbReference type="Proteomes" id="UP000000809">
    <property type="component" value="Chromosome"/>
</dbReference>
<dbReference type="GO" id="GO:0022627">
    <property type="term" value="C:cytosolic small ribosomal subunit"/>
    <property type="evidence" value="ECO:0007669"/>
    <property type="project" value="TreeGrafter"/>
</dbReference>
<dbReference type="GO" id="GO:0003729">
    <property type="term" value="F:mRNA binding"/>
    <property type="evidence" value="ECO:0007669"/>
    <property type="project" value="UniProtKB-UniRule"/>
</dbReference>
<dbReference type="GO" id="GO:0019843">
    <property type="term" value="F:rRNA binding"/>
    <property type="evidence" value="ECO:0007669"/>
    <property type="project" value="UniProtKB-UniRule"/>
</dbReference>
<dbReference type="GO" id="GO:0003735">
    <property type="term" value="F:structural constituent of ribosome"/>
    <property type="evidence" value="ECO:0007669"/>
    <property type="project" value="InterPro"/>
</dbReference>
<dbReference type="GO" id="GO:0006412">
    <property type="term" value="P:translation"/>
    <property type="evidence" value="ECO:0007669"/>
    <property type="project" value="UniProtKB-UniRule"/>
</dbReference>
<dbReference type="CDD" id="cd02412">
    <property type="entry name" value="KH-II_30S_S3"/>
    <property type="match status" value="1"/>
</dbReference>
<dbReference type="FunFam" id="3.30.1140.32:FF:000001">
    <property type="entry name" value="30S ribosomal protein S3"/>
    <property type="match status" value="1"/>
</dbReference>
<dbReference type="FunFam" id="3.30.300.20:FF:000001">
    <property type="entry name" value="30S ribosomal protein S3"/>
    <property type="match status" value="1"/>
</dbReference>
<dbReference type="Gene3D" id="3.30.300.20">
    <property type="match status" value="1"/>
</dbReference>
<dbReference type="Gene3D" id="3.30.1140.32">
    <property type="entry name" value="Ribosomal protein S3, C-terminal domain"/>
    <property type="match status" value="1"/>
</dbReference>
<dbReference type="HAMAP" id="MF_01309_B">
    <property type="entry name" value="Ribosomal_uS3_B"/>
    <property type="match status" value="1"/>
</dbReference>
<dbReference type="InterPro" id="IPR004087">
    <property type="entry name" value="KH_dom"/>
</dbReference>
<dbReference type="InterPro" id="IPR015946">
    <property type="entry name" value="KH_dom-like_a/b"/>
</dbReference>
<dbReference type="InterPro" id="IPR004044">
    <property type="entry name" value="KH_dom_type_2"/>
</dbReference>
<dbReference type="InterPro" id="IPR009019">
    <property type="entry name" value="KH_sf_prok-type"/>
</dbReference>
<dbReference type="InterPro" id="IPR036419">
    <property type="entry name" value="Ribosomal_S3_C_sf"/>
</dbReference>
<dbReference type="InterPro" id="IPR005704">
    <property type="entry name" value="Ribosomal_uS3_bac-typ"/>
</dbReference>
<dbReference type="InterPro" id="IPR001351">
    <property type="entry name" value="Ribosomal_uS3_C"/>
</dbReference>
<dbReference type="InterPro" id="IPR018280">
    <property type="entry name" value="Ribosomal_uS3_CS"/>
</dbReference>
<dbReference type="NCBIfam" id="TIGR01009">
    <property type="entry name" value="rpsC_bact"/>
    <property type="match status" value="1"/>
</dbReference>
<dbReference type="PANTHER" id="PTHR11760">
    <property type="entry name" value="30S/40S RIBOSOMAL PROTEIN S3"/>
    <property type="match status" value="1"/>
</dbReference>
<dbReference type="PANTHER" id="PTHR11760:SF19">
    <property type="entry name" value="SMALL RIBOSOMAL SUBUNIT PROTEIN US3C"/>
    <property type="match status" value="1"/>
</dbReference>
<dbReference type="Pfam" id="PF07650">
    <property type="entry name" value="KH_2"/>
    <property type="match status" value="1"/>
</dbReference>
<dbReference type="Pfam" id="PF00189">
    <property type="entry name" value="Ribosomal_S3_C"/>
    <property type="match status" value="1"/>
</dbReference>
<dbReference type="SMART" id="SM00322">
    <property type="entry name" value="KH"/>
    <property type="match status" value="1"/>
</dbReference>
<dbReference type="SUPFAM" id="SSF54814">
    <property type="entry name" value="Prokaryotic type KH domain (KH-domain type II)"/>
    <property type="match status" value="1"/>
</dbReference>
<dbReference type="SUPFAM" id="SSF54821">
    <property type="entry name" value="Ribosomal protein S3 C-terminal domain"/>
    <property type="match status" value="1"/>
</dbReference>
<dbReference type="PROSITE" id="PS50823">
    <property type="entry name" value="KH_TYPE_2"/>
    <property type="match status" value="1"/>
</dbReference>
<dbReference type="PROSITE" id="PS00548">
    <property type="entry name" value="RIBOSOMAL_S3"/>
    <property type="match status" value="1"/>
</dbReference>
<comment type="function">
    <text evidence="1">Binds the lower part of the 30S subunit head. Binds mRNA in the 70S ribosome, positioning it for translation.</text>
</comment>
<comment type="subunit">
    <text evidence="1">Part of the 30S ribosomal subunit. Forms a tight complex with proteins S10 and S14.</text>
</comment>
<comment type="similarity">
    <text evidence="1">Belongs to the universal ribosomal protein uS3 family.</text>
</comment>
<reference key="1">
    <citation type="journal article" date="2001" name="Proc. Natl. Acad. Sci. U.S.A.">
        <title>Complete genomic sequence of Pasteurella multocida Pm70.</title>
        <authorList>
            <person name="May B.J."/>
            <person name="Zhang Q."/>
            <person name="Li L.L."/>
            <person name="Paustian M.L."/>
            <person name="Whittam T.S."/>
            <person name="Kapur V."/>
        </authorList>
    </citation>
    <scope>NUCLEOTIDE SEQUENCE [LARGE SCALE GENOMIC DNA]</scope>
    <source>
        <strain>Pm70</strain>
    </source>
</reference>
<accession>Q9CL37</accession>
<organism>
    <name type="scientific">Pasteurella multocida (strain Pm70)</name>
    <dbReference type="NCBI Taxonomy" id="272843"/>
    <lineage>
        <taxon>Bacteria</taxon>
        <taxon>Pseudomonadati</taxon>
        <taxon>Pseudomonadota</taxon>
        <taxon>Gammaproteobacteria</taxon>
        <taxon>Pasteurellales</taxon>
        <taxon>Pasteurellaceae</taxon>
        <taxon>Pasteurella</taxon>
    </lineage>
</organism>
<keyword id="KW-1185">Reference proteome</keyword>
<keyword id="KW-0687">Ribonucleoprotein</keyword>
<keyword id="KW-0689">Ribosomal protein</keyword>
<keyword id="KW-0694">RNA-binding</keyword>
<keyword id="KW-0699">rRNA-binding</keyword>
<name>RS3_PASMU</name>
<feature type="chain" id="PRO_0000130167" description="Small ribosomal subunit protein uS3">
    <location>
        <begin position="1"/>
        <end position="235"/>
    </location>
</feature>
<feature type="domain" description="KH type-2" evidence="1">
    <location>
        <begin position="39"/>
        <end position="107"/>
    </location>
</feature>
<feature type="region of interest" description="Disordered" evidence="2">
    <location>
        <begin position="215"/>
        <end position="235"/>
    </location>
</feature>
<sequence length="235" mass="25857">MGQKVHPHGIRLGIVKPWSSTWFANTQDFADNLDGDFKVRKFLNKELANASVSRITIERPAKSIRVTIHTARPGIVIGKKGEDVEKLRNAVAAIAGVPAQINIAEVKKPELDAKLVADSIASQLERRVMFRRAMKRAVQNAMRLGAKGIKVEVSGRLGGAEIARSEWYREGRVPLHTLRADIDYNTAEAHTTYGVIGIKVWIFKGEILGGMAAIAQPEQQPADKPKKAPRGKGRK</sequence>
<proteinExistence type="inferred from homology"/>
<gene>
    <name evidence="1" type="primary">rpsC</name>
    <name evidence="1" type="synonym">rps3</name>
    <name type="ordered locus">PM1409</name>
</gene>
<evidence type="ECO:0000255" key="1">
    <source>
        <dbReference type="HAMAP-Rule" id="MF_01309"/>
    </source>
</evidence>
<evidence type="ECO:0000256" key="2">
    <source>
        <dbReference type="SAM" id="MobiDB-lite"/>
    </source>
</evidence>
<evidence type="ECO:0000305" key="3"/>
<protein>
    <recommendedName>
        <fullName evidence="1">Small ribosomal subunit protein uS3</fullName>
    </recommendedName>
    <alternativeName>
        <fullName evidence="3">30S ribosomal protein S3</fullName>
    </alternativeName>
</protein>